<organism>
    <name type="scientific">Oceanobacillus iheyensis (strain DSM 14371 / CIP 107618 / JCM 11309 / KCTC 3954 / HTE831)</name>
    <dbReference type="NCBI Taxonomy" id="221109"/>
    <lineage>
        <taxon>Bacteria</taxon>
        <taxon>Bacillati</taxon>
        <taxon>Bacillota</taxon>
        <taxon>Bacilli</taxon>
        <taxon>Bacillales</taxon>
        <taxon>Bacillaceae</taxon>
        <taxon>Oceanobacillus</taxon>
    </lineage>
</organism>
<name>PYRE_OCEIH</name>
<comment type="function">
    <text evidence="1">Catalyzes the transfer of a ribosyl phosphate group from 5-phosphoribose 1-diphosphate to orotate, leading to the formation of orotidine monophosphate (OMP).</text>
</comment>
<comment type="catalytic activity">
    <reaction evidence="1">
        <text>orotidine 5'-phosphate + diphosphate = orotate + 5-phospho-alpha-D-ribose 1-diphosphate</text>
        <dbReference type="Rhea" id="RHEA:10380"/>
        <dbReference type="ChEBI" id="CHEBI:30839"/>
        <dbReference type="ChEBI" id="CHEBI:33019"/>
        <dbReference type="ChEBI" id="CHEBI:57538"/>
        <dbReference type="ChEBI" id="CHEBI:58017"/>
        <dbReference type="EC" id="2.4.2.10"/>
    </reaction>
</comment>
<comment type="cofactor">
    <cofactor evidence="1">
        <name>Mg(2+)</name>
        <dbReference type="ChEBI" id="CHEBI:18420"/>
    </cofactor>
</comment>
<comment type="pathway">
    <text evidence="1">Pyrimidine metabolism; UMP biosynthesis via de novo pathway; UMP from orotate: step 1/2.</text>
</comment>
<comment type="subunit">
    <text evidence="1">Homodimer.</text>
</comment>
<comment type="similarity">
    <text evidence="1">Belongs to the purine/pyrimidine phosphoribosyltransferase family. PyrE subfamily.</text>
</comment>
<evidence type="ECO:0000255" key="1">
    <source>
        <dbReference type="HAMAP-Rule" id="MF_01208"/>
    </source>
</evidence>
<accession>Q8ER35</accession>
<feature type="chain" id="PRO_0000110717" description="Orotate phosphoribosyltransferase">
    <location>
        <begin position="1"/>
        <end position="202"/>
    </location>
</feature>
<feature type="binding site" evidence="1">
    <location>
        <position position="94"/>
    </location>
    <ligand>
        <name>5-phospho-alpha-D-ribose 1-diphosphate</name>
        <dbReference type="ChEBI" id="CHEBI:58017"/>
        <note>ligand shared between dimeric partners</note>
    </ligand>
</feature>
<feature type="binding site" evidence="1">
    <location>
        <position position="98"/>
    </location>
    <ligand>
        <name>5-phospho-alpha-D-ribose 1-diphosphate</name>
        <dbReference type="ChEBI" id="CHEBI:58017"/>
        <note>ligand shared between dimeric partners</note>
    </ligand>
</feature>
<feature type="binding site" evidence="1">
    <location>
        <position position="100"/>
    </location>
    <ligand>
        <name>5-phospho-alpha-D-ribose 1-diphosphate</name>
        <dbReference type="ChEBI" id="CHEBI:58017"/>
        <note>ligand shared between dimeric partners</note>
    </ligand>
</feature>
<feature type="binding site" description="in other chain" evidence="1">
    <location>
        <begin position="120"/>
        <end position="128"/>
    </location>
    <ligand>
        <name>5-phospho-alpha-D-ribose 1-diphosphate</name>
        <dbReference type="ChEBI" id="CHEBI:58017"/>
        <note>ligand shared between dimeric partners</note>
    </ligand>
</feature>
<feature type="binding site" evidence="1">
    <location>
        <position position="124"/>
    </location>
    <ligand>
        <name>orotate</name>
        <dbReference type="ChEBI" id="CHEBI:30839"/>
    </ligand>
</feature>
<dbReference type="EC" id="2.4.2.10" evidence="1"/>
<dbReference type="EMBL" id="BA000028">
    <property type="protein sequence ID" value="BAC13451.1"/>
    <property type="molecule type" value="Genomic_DNA"/>
</dbReference>
<dbReference type="RefSeq" id="WP_011065896.1">
    <property type="nucleotide sequence ID" value="NC_004193.1"/>
</dbReference>
<dbReference type="SMR" id="Q8ER35"/>
<dbReference type="STRING" id="221109.gene:10733735"/>
<dbReference type="KEGG" id="oih:OB1495"/>
<dbReference type="eggNOG" id="COG0461">
    <property type="taxonomic scope" value="Bacteria"/>
</dbReference>
<dbReference type="HOGENOM" id="CLU_074878_1_1_9"/>
<dbReference type="OrthoDB" id="9802134at2"/>
<dbReference type="PhylomeDB" id="Q8ER35"/>
<dbReference type="UniPathway" id="UPA00070">
    <property type="reaction ID" value="UER00119"/>
</dbReference>
<dbReference type="Proteomes" id="UP000000822">
    <property type="component" value="Chromosome"/>
</dbReference>
<dbReference type="GO" id="GO:0000287">
    <property type="term" value="F:magnesium ion binding"/>
    <property type="evidence" value="ECO:0007669"/>
    <property type="project" value="UniProtKB-UniRule"/>
</dbReference>
<dbReference type="GO" id="GO:0004588">
    <property type="term" value="F:orotate phosphoribosyltransferase activity"/>
    <property type="evidence" value="ECO:0007669"/>
    <property type="project" value="UniProtKB-UniRule"/>
</dbReference>
<dbReference type="GO" id="GO:0044205">
    <property type="term" value="P:'de novo' UMP biosynthetic process"/>
    <property type="evidence" value="ECO:0007669"/>
    <property type="project" value="UniProtKB-UniRule"/>
</dbReference>
<dbReference type="GO" id="GO:0019856">
    <property type="term" value="P:pyrimidine nucleobase biosynthetic process"/>
    <property type="evidence" value="ECO:0007669"/>
    <property type="project" value="TreeGrafter"/>
</dbReference>
<dbReference type="CDD" id="cd06223">
    <property type="entry name" value="PRTases_typeI"/>
    <property type="match status" value="1"/>
</dbReference>
<dbReference type="Gene3D" id="3.40.50.2020">
    <property type="match status" value="1"/>
</dbReference>
<dbReference type="HAMAP" id="MF_01208">
    <property type="entry name" value="PyrE"/>
    <property type="match status" value="1"/>
</dbReference>
<dbReference type="InterPro" id="IPR023031">
    <property type="entry name" value="OPRT"/>
</dbReference>
<dbReference type="InterPro" id="IPR004467">
    <property type="entry name" value="Or_phspho_trans_dom"/>
</dbReference>
<dbReference type="InterPro" id="IPR000836">
    <property type="entry name" value="PRibTrfase_dom"/>
</dbReference>
<dbReference type="InterPro" id="IPR029057">
    <property type="entry name" value="PRTase-like"/>
</dbReference>
<dbReference type="NCBIfam" id="TIGR00336">
    <property type="entry name" value="pyrE"/>
    <property type="match status" value="1"/>
</dbReference>
<dbReference type="PANTHER" id="PTHR19278">
    <property type="entry name" value="OROTATE PHOSPHORIBOSYLTRANSFERASE"/>
    <property type="match status" value="1"/>
</dbReference>
<dbReference type="PANTHER" id="PTHR19278:SF9">
    <property type="entry name" value="URIDINE 5'-MONOPHOSPHATE SYNTHASE"/>
    <property type="match status" value="1"/>
</dbReference>
<dbReference type="Pfam" id="PF00156">
    <property type="entry name" value="Pribosyltran"/>
    <property type="match status" value="1"/>
</dbReference>
<dbReference type="SUPFAM" id="SSF53271">
    <property type="entry name" value="PRTase-like"/>
    <property type="match status" value="1"/>
</dbReference>
<dbReference type="PROSITE" id="PS00103">
    <property type="entry name" value="PUR_PYR_PR_TRANSFER"/>
    <property type="match status" value="1"/>
</dbReference>
<sequence>MNKQITKELLEIGAVQINLDTYFTWTSGLKSPIYCDNRLTMSYPKVRKNIARAFILMLEQDGFKPDVIAGCATAGISHAAWLSDLLGLPMVYVRSKPKGHGKGNQIEGASVEGKTVLVIEDLISTGGSSIEAAKALQQAGANILAVYSIFTYGLDKSKDAFLQANIAYNSITGFDELIQELIGSGELSEEEKNELLTFRESL</sequence>
<proteinExistence type="inferred from homology"/>
<gene>
    <name evidence="1" type="primary">pyrE</name>
    <name type="ordered locus">OB1495</name>
</gene>
<keyword id="KW-0328">Glycosyltransferase</keyword>
<keyword id="KW-0460">Magnesium</keyword>
<keyword id="KW-0665">Pyrimidine biosynthesis</keyword>
<keyword id="KW-1185">Reference proteome</keyword>
<keyword id="KW-0808">Transferase</keyword>
<protein>
    <recommendedName>
        <fullName evidence="1">Orotate phosphoribosyltransferase</fullName>
        <shortName evidence="1">OPRT</shortName>
        <shortName evidence="1">OPRTase</shortName>
        <ecNumber evidence="1">2.4.2.10</ecNumber>
    </recommendedName>
</protein>
<reference key="1">
    <citation type="journal article" date="2002" name="Nucleic Acids Res.">
        <title>Genome sequence of Oceanobacillus iheyensis isolated from the Iheya Ridge and its unexpected adaptive capabilities to extreme environments.</title>
        <authorList>
            <person name="Takami H."/>
            <person name="Takaki Y."/>
            <person name="Uchiyama I."/>
        </authorList>
    </citation>
    <scope>NUCLEOTIDE SEQUENCE [LARGE SCALE GENOMIC DNA]</scope>
    <source>
        <strain>DSM 14371 / CIP 107618 / JCM 11309 / KCTC 3954 / HTE831</strain>
    </source>
</reference>